<dbReference type="EC" id="6.1.1.3" evidence="1"/>
<dbReference type="EMBL" id="AE015925">
    <property type="protein sequence ID" value="AAP05696.1"/>
    <property type="molecule type" value="Genomic_DNA"/>
</dbReference>
<dbReference type="RefSeq" id="WP_011006909.1">
    <property type="nucleotide sequence ID" value="NC_003361.3"/>
</dbReference>
<dbReference type="SMR" id="Q821I3"/>
<dbReference type="STRING" id="227941.CCA_00957"/>
<dbReference type="KEGG" id="cca:CCA_00957"/>
<dbReference type="eggNOG" id="COG0441">
    <property type="taxonomic scope" value="Bacteria"/>
</dbReference>
<dbReference type="HOGENOM" id="CLU_008554_3_1_0"/>
<dbReference type="OrthoDB" id="9802304at2"/>
<dbReference type="Proteomes" id="UP000002193">
    <property type="component" value="Chromosome"/>
</dbReference>
<dbReference type="GO" id="GO:0005737">
    <property type="term" value="C:cytoplasm"/>
    <property type="evidence" value="ECO:0007669"/>
    <property type="project" value="UniProtKB-SubCell"/>
</dbReference>
<dbReference type="GO" id="GO:0005524">
    <property type="term" value="F:ATP binding"/>
    <property type="evidence" value="ECO:0007669"/>
    <property type="project" value="UniProtKB-UniRule"/>
</dbReference>
<dbReference type="GO" id="GO:0046872">
    <property type="term" value="F:metal ion binding"/>
    <property type="evidence" value="ECO:0007669"/>
    <property type="project" value="UniProtKB-KW"/>
</dbReference>
<dbReference type="GO" id="GO:0004829">
    <property type="term" value="F:threonine-tRNA ligase activity"/>
    <property type="evidence" value="ECO:0007669"/>
    <property type="project" value="UniProtKB-UniRule"/>
</dbReference>
<dbReference type="GO" id="GO:0000049">
    <property type="term" value="F:tRNA binding"/>
    <property type="evidence" value="ECO:0007669"/>
    <property type="project" value="UniProtKB-KW"/>
</dbReference>
<dbReference type="GO" id="GO:0006435">
    <property type="term" value="P:threonyl-tRNA aminoacylation"/>
    <property type="evidence" value="ECO:0007669"/>
    <property type="project" value="UniProtKB-UniRule"/>
</dbReference>
<dbReference type="CDD" id="cd01667">
    <property type="entry name" value="TGS_ThrRS"/>
    <property type="match status" value="1"/>
</dbReference>
<dbReference type="CDD" id="cd00860">
    <property type="entry name" value="ThrRS_anticodon"/>
    <property type="match status" value="1"/>
</dbReference>
<dbReference type="CDD" id="cd00771">
    <property type="entry name" value="ThrRS_core"/>
    <property type="match status" value="1"/>
</dbReference>
<dbReference type="FunFam" id="3.30.930.10:FF:000019">
    <property type="entry name" value="Threonine--tRNA ligase"/>
    <property type="match status" value="1"/>
</dbReference>
<dbReference type="FunFam" id="3.40.50.800:FF:000001">
    <property type="entry name" value="Threonine--tRNA ligase"/>
    <property type="match status" value="1"/>
</dbReference>
<dbReference type="FunFam" id="3.30.980.10:FF:000005">
    <property type="entry name" value="Threonyl-tRNA synthetase, mitochondrial"/>
    <property type="match status" value="1"/>
</dbReference>
<dbReference type="Gene3D" id="3.10.20.30">
    <property type="match status" value="1"/>
</dbReference>
<dbReference type="Gene3D" id="3.40.50.800">
    <property type="entry name" value="Anticodon-binding domain"/>
    <property type="match status" value="1"/>
</dbReference>
<dbReference type="Gene3D" id="3.30.930.10">
    <property type="entry name" value="Bira Bifunctional Protein, Domain 2"/>
    <property type="match status" value="1"/>
</dbReference>
<dbReference type="Gene3D" id="3.30.980.10">
    <property type="entry name" value="Threonyl-trna Synthetase, Chain A, domain 2"/>
    <property type="match status" value="1"/>
</dbReference>
<dbReference type="HAMAP" id="MF_00184">
    <property type="entry name" value="Thr_tRNA_synth"/>
    <property type="match status" value="1"/>
</dbReference>
<dbReference type="InterPro" id="IPR002314">
    <property type="entry name" value="aa-tRNA-synt_IIb"/>
</dbReference>
<dbReference type="InterPro" id="IPR006195">
    <property type="entry name" value="aa-tRNA-synth_II"/>
</dbReference>
<dbReference type="InterPro" id="IPR045864">
    <property type="entry name" value="aa-tRNA-synth_II/BPL/LPL"/>
</dbReference>
<dbReference type="InterPro" id="IPR004154">
    <property type="entry name" value="Anticodon-bd"/>
</dbReference>
<dbReference type="InterPro" id="IPR036621">
    <property type="entry name" value="Anticodon-bd_dom_sf"/>
</dbReference>
<dbReference type="InterPro" id="IPR012675">
    <property type="entry name" value="Beta-grasp_dom_sf"/>
</dbReference>
<dbReference type="InterPro" id="IPR004095">
    <property type="entry name" value="TGS"/>
</dbReference>
<dbReference type="InterPro" id="IPR012676">
    <property type="entry name" value="TGS-like"/>
</dbReference>
<dbReference type="InterPro" id="IPR002320">
    <property type="entry name" value="Thr-tRNA-ligase_IIa"/>
</dbReference>
<dbReference type="InterPro" id="IPR018163">
    <property type="entry name" value="Thr/Ala-tRNA-synth_IIc_edit"/>
</dbReference>
<dbReference type="InterPro" id="IPR047246">
    <property type="entry name" value="ThrRS_anticodon"/>
</dbReference>
<dbReference type="InterPro" id="IPR033728">
    <property type="entry name" value="ThrRS_core"/>
</dbReference>
<dbReference type="InterPro" id="IPR012947">
    <property type="entry name" value="tRNA_SAD"/>
</dbReference>
<dbReference type="NCBIfam" id="TIGR00418">
    <property type="entry name" value="thrS"/>
    <property type="match status" value="1"/>
</dbReference>
<dbReference type="PANTHER" id="PTHR11451:SF44">
    <property type="entry name" value="THREONINE--TRNA LIGASE, CHLOROPLASTIC_MITOCHONDRIAL 2"/>
    <property type="match status" value="1"/>
</dbReference>
<dbReference type="PANTHER" id="PTHR11451">
    <property type="entry name" value="THREONINE-TRNA LIGASE"/>
    <property type="match status" value="1"/>
</dbReference>
<dbReference type="Pfam" id="PF03129">
    <property type="entry name" value="HGTP_anticodon"/>
    <property type="match status" value="1"/>
</dbReference>
<dbReference type="Pfam" id="PF02824">
    <property type="entry name" value="TGS"/>
    <property type="match status" value="1"/>
</dbReference>
<dbReference type="Pfam" id="PF00587">
    <property type="entry name" value="tRNA-synt_2b"/>
    <property type="match status" value="1"/>
</dbReference>
<dbReference type="Pfam" id="PF07973">
    <property type="entry name" value="tRNA_SAD"/>
    <property type="match status" value="1"/>
</dbReference>
<dbReference type="PRINTS" id="PR01047">
    <property type="entry name" value="TRNASYNTHTHR"/>
</dbReference>
<dbReference type="SMART" id="SM00863">
    <property type="entry name" value="tRNA_SAD"/>
    <property type="match status" value="1"/>
</dbReference>
<dbReference type="SUPFAM" id="SSF52954">
    <property type="entry name" value="Class II aaRS ABD-related"/>
    <property type="match status" value="1"/>
</dbReference>
<dbReference type="SUPFAM" id="SSF55681">
    <property type="entry name" value="Class II aaRS and biotin synthetases"/>
    <property type="match status" value="1"/>
</dbReference>
<dbReference type="SUPFAM" id="SSF81271">
    <property type="entry name" value="TGS-like"/>
    <property type="match status" value="1"/>
</dbReference>
<dbReference type="SUPFAM" id="SSF55186">
    <property type="entry name" value="ThrRS/AlaRS common domain"/>
    <property type="match status" value="1"/>
</dbReference>
<dbReference type="PROSITE" id="PS50862">
    <property type="entry name" value="AA_TRNA_LIGASE_II"/>
    <property type="match status" value="1"/>
</dbReference>
<dbReference type="PROSITE" id="PS51880">
    <property type="entry name" value="TGS"/>
    <property type="match status" value="1"/>
</dbReference>
<evidence type="ECO:0000255" key="1">
    <source>
        <dbReference type="HAMAP-Rule" id="MF_00184"/>
    </source>
</evidence>
<evidence type="ECO:0000255" key="2">
    <source>
        <dbReference type="PROSITE-ProRule" id="PRU01228"/>
    </source>
</evidence>
<reference key="1">
    <citation type="journal article" date="2003" name="Nucleic Acids Res.">
        <title>Genome sequence of Chlamydophila caviae (Chlamydia psittaci GPIC): examining the role of niche-specific genes in the evolution of the Chlamydiaceae.</title>
        <authorList>
            <person name="Read T.D."/>
            <person name="Myers G.S.A."/>
            <person name="Brunham R.C."/>
            <person name="Nelson W.C."/>
            <person name="Paulsen I.T."/>
            <person name="Heidelberg J.F."/>
            <person name="Holtzapple E.K."/>
            <person name="Khouri H.M."/>
            <person name="Federova N.B."/>
            <person name="Carty H.A."/>
            <person name="Umayam L.A."/>
            <person name="Haft D.H."/>
            <person name="Peterson J.D."/>
            <person name="Beanan M.J."/>
            <person name="White O."/>
            <person name="Salzberg S.L."/>
            <person name="Hsia R.-C."/>
            <person name="McClarty G."/>
            <person name="Rank R.G."/>
            <person name="Bavoil P.M."/>
            <person name="Fraser C.M."/>
        </authorList>
    </citation>
    <scope>NUCLEOTIDE SEQUENCE [LARGE SCALE GENOMIC DNA]</scope>
    <source>
        <strain>ATCC VR-813 / DSM 19441 / 03DC25 / GPIC</strain>
    </source>
</reference>
<sequence>MIRVICNNETVELPKGATAADFASKIKNSHYFAGVVINDQIKDLSTTLNEGDTLRFVTFEDSEGREIFLHTSAHILAQAVLRLWPQAVPTIGPVINQGFYYDFANLSVSEEDLLAIENMMEQIVQEKLEVSKKTFNGKEEALKEFMHNAFKAELIQELPEGESITAYSQGEFMDLCRGPHLPSTAPVKAFKLLRTSAAYWRGDPSRESLVRIYGISFPTTKELKEHLHQLEEAKKRDHRVLGAKLDLFSQQECSAGMPFFHPRGMIVWDALIGYWQRLHQLAGYKQILTPQLMNRSLWETSGHWSNYKANMYTLKIDEEDYAIKPMNCPGCMLYYKTRLHSYKEFPLRIAEIGHVHRYEVSGALSGLMRVRAFHQDDAHVFLTPEQVEEETLNILNLVSELYSTFGLEYHLELSTRPEKDTIGSDELWELATSALERALINSNTPFIINPGDGAFYGPKIDIHVKDAIQRTWQCGTIQLDMFLPERFELEYTNAQGEKSTPIMLHRALFGSIERFLGILIEHFKGKFPLWLSPEHIRLITVADRHQPHAKELAAAWQKLGLVVTVDDSNESVSKKIRNAQNMQVNYMVTLGDREIEENTLAIRTRDNRVLNAMTVETFINTILEEKNSLSLTPLL</sequence>
<name>SYT_CHLCV</name>
<proteinExistence type="inferred from homology"/>
<comment type="function">
    <text evidence="1">Catalyzes the attachment of threonine to tRNA(Thr) in a two-step reaction: L-threonine is first activated by ATP to form Thr-AMP and then transferred to the acceptor end of tRNA(Thr). Also edits incorrectly charged L-seryl-tRNA(Thr).</text>
</comment>
<comment type="catalytic activity">
    <reaction evidence="1">
        <text>tRNA(Thr) + L-threonine + ATP = L-threonyl-tRNA(Thr) + AMP + diphosphate + H(+)</text>
        <dbReference type="Rhea" id="RHEA:24624"/>
        <dbReference type="Rhea" id="RHEA-COMP:9670"/>
        <dbReference type="Rhea" id="RHEA-COMP:9704"/>
        <dbReference type="ChEBI" id="CHEBI:15378"/>
        <dbReference type="ChEBI" id="CHEBI:30616"/>
        <dbReference type="ChEBI" id="CHEBI:33019"/>
        <dbReference type="ChEBI" id="CHEBI:57926"/>
        <dbReference type="ChEBI" id="CHEBI:78442"/>
        <dbReference type="ChEBI" id="CHEBI:78534"/>
        <dbReference type="ChEBI" id="CHEBI:456215"/>
        <dbReference type="EC" id="6.1.1.3"/>
    </reaction>
</comment>
<comment type="cofactor">
    <cofactor evidence="1">
        <name>Zn(2+)</name>
        <dbReference type="ChEBI" id="CHEBI:29105"/>
    </cofactor>
    <text evidence="1">Binds 1 zinc ion per subunit.</text>
</comment>
<comment type="subunit">
    <text evidence="1">Homodimer.</text>
</comment>
<comment type="subcellular location">
    <subcellularLocation>
        <location evidence="1">Cytoplasm</location>
    </subcellularLocation>
</comment>
<comment type="similarity">
    <text evidence="1">Belongs to the class-II aminoacyl-tRNA synthetase family.</text>
</comment>
<keyword id="KW-0030">Aminoacyl-tRNA synthetase</keyword>
<keyword id="KW-0067">ATP-binding</keyword>
<keyword id="KW-0963">Cytoplasm</keyword>
<keyword id="KW-0436">Ligase</keyword>
<keyword id="KW-0479">Metal-binding</keyword>
<keyword id="KW-0547">Nucleotide-binding</keyword>
<keyword id="KW-0648">Protein biosynthesis</keyword>
<keyword id="KW-0694">RNA-binding</keyword>
<keyword id="KW-0820">tRNA-binding</keyword>
<keyword id="KW-0862">Zinc</keyword>
<accession>Q821I3</accession>
<feature type="chain" id="PRO_0000100959" description="Threonine--tRNA ligase">
    <location>
        <begin position="1"/>
        <end position="635"/>
    </location>
</feature>
<feature type="domain" description="TGS" evidence="2">
    <location>
        <begin position="1"/>
        <end position="58"/>
    </location>
</feature>
<feature type="region of interest" description="Catalytic" evidence="1">
    <location>
        <begin position="237"/>
        <end position="528"/>
    </location>
</feature>
<feature type="binding site" evidence="1">
    <location>
        <position position="328"/>
    </location>
    <ligand>
        <name>Zn(2+)</name>
        <dbReference type="ChEBI" id="CHEBI:29105"/>
    </ligand>
</feature>
<feature type="binding site" evidence="1">
    <location>
        <position position="379"/>
    </location>
    <ligand>
        <name>Zn(2+)</name>
        <dbReference type="ChEBI" id="CHEBI:29105"/>
    </ligand>
</feature>
<feature type="binding site" evidence="1">
    <location>
        <position position="505"/>
    </location>
    <ligand>
        <name>Zn(2+)</name>
        <dbReference type="ChEBI" id="CHEBI:29105"/>
    </ligand>
</feature>
<organism>
    <name type="scientific">Chlamydia caviae (strain ATCC VR-813 / DSM 19441 / 03DC25 / GPIC)</name>
    <name type="common">Chlamydophila caviae</name>
    <dbReference type="NCBI Taxonomy" id="227941"/>
    <lineage>
        <taxon>Bacteria</taxon>
        <taxon>Pseudomonadati</taxon>
        <taxon>Chlamydiota</taxon>
        <taxon>Chlamydiia</taxon>
        <taxon>Chlamydiales</taxon>
        <taxon>Chlamydiaceae</taxon>
        <taxon>Chlamydia/Chlamydophila group</taxon>
        <taxon>Chlamydia</taxon>
    </lineage>
</organism>
<gene>
    <name evidence="1" type="primary">thrS</name>
    <name type="ordered locus">CCA_00957</name>
</gene>
<protein>
    <recommendedName>
        <fullName evidence="1">Threonine--tRNA ligase</fullName>
        <ecNumber evidence="1">6.1.1.3</ecNumber>
    </recommendedName>
    <alternativeName>
        <fullName evidence="1">Threonyl-tRNA synthetase</fullName>
        <shortName evidence="1">ThrRS</shortName>
    </alternativeName>
</protein>